<reference key="1">
    <citation type="journal article" date="2004" name="Plant Physiol.">
        <title>The biosynthesis of UDP-galacturonic acid in plants. Functional cloning and characterization of Arabidopsis UDP-D-glucuronic acid 4-epimerase.</title>
        <authorList>
            <person name="Gu X."/>
            <person name="Bar-Peled M."/>
        </authorList>
    </citation>
    <scope>NUCLEOTIDE SEQUENCE [MRNA]</scope>
    <scope>ACTIVITY REGULATION</scope>
    <scope>SUBUNIT</scope>
    <scope>TISSUE SPECIFICITY</scope>
    <scope>BIOPHYSICOCHEMICAL PROPERTIES</scope>
</reference>
<reference key="2">
    <citation type="journal article" date="1999" name="Nature">
        <title>Sequence and analysis of chromosome 2 of the plant Arabidopsis thaliana.</title>
        <authorList>
            <person name="Lin X."/>
            <person name="Kaul S."/>
            <person name="Rounsley S.D."/>
            <person name="Shea T.P."/>
            <person name="Benito M.-I."/>
            <person name="Town C.D."/>
            <person name="Fujii C.Y."/>
            <person name="Mason T.M."/>
            <person name="Bowman C.L."/>
            <person name="Barnstead M.E."/>
            <person name="Feldblyum T.V."/>
            <person name="Buell C.R."/>
            <person name="Ketchum K.A."/>
            <person name="Lee J.J."/>
            <person name="Ronning C.M."/>
            <person name="Koo H.L."/>
            <person name="Moffat K.S."/>
            <person name="Cronin L.A."/>
            <person name="Shen M."/>
            <person name="Pai G."/>
            <person name="Van Aken S."/>
            <person name="Umayam L."/>
            <person name="Tallon L.J."/>
            <person name="Gill J.E."/>
            <person name="Adams M.D."/>
            <person name="Carrera A.J."/>
            <person name="Creasy T.H."/>
            <person name="Goodman H.M."/>
            <person name="Somerville C.R."/>
            <person name="Copenhaver G.P."/>
            <person name="Preuss D."/>
            <person name="Nierman W.C."/>
            <person name="White O."/>
            <person name="Eisen J.A."/>
            <person name="Salzberg S.L."/>
            <person name="Fraser C.M."/>
            <person name="Venter J.C."/>
        </authorList>
    </citation>
    <scope>NUCLEOTIDE SEQUENCE [LARGE SCALE GENOMIC DNA]</scope>
    <source>
        <strain>cv. Columbia</strain>
    </source>
</reference>
<reference key="3">
    <citation type="journal article" date="2017" name="Plant J.">
        <title>Araport11: a complete reannotation of the Arabidopsis thaliana reference genome.</title>
        <authorList>
            <person name="Cheng C.Y."/>
            <person name="Krishnakumar V."/>
            <person name="Chan A.P."/>
            <person name="Thibaud-Nissen F."/>
            <person name="Schobel S."/>
            <person name="Town C.D."/>
        </authorList>
    </citation>
    <scope>GENOME REANNOTATION</scope>
    <source>
        <strain>cv. Columbia</strain>
    </source>
</reference>
<reference key="4">
    <citation type="journal article" date="2003" name="Science">
        <title>Empirical analysis of transcriptional activity in the Arabidopsis genome.</title>
        <authorList>
            <person name="Yamada K."/>
            <person name="Lim J."/>
            <person name="Dale J.M."/>
            <person name="Chen H."/>
            <person name="Shinn P."/>
            <person name="Palm C.J."/>
            <person name="Southwick A.M."/>
            <person name="Wu H.C."/>
            <person name="Kim C.J."/>
            <person name="Nguyen M."/>
            <person name="Pham P.K."/>
            <person name="Cheuk R.F."/>
            <person name="Karlin-Newmann G."/>
            <person name="Liu S.X."/>
            <person name="Lam B."/>
            <person name="Sakano H."/>
            <person name="Wu T."/>
            <person name="Yu G."/>
            <person name="Miranda M."/>
            <person name="Quach H.L."/>
            <person name="Tripp M."/>
            <person name="Chang C.H."/>
            <person name="Lee J.M."/>
            <person name="Toriumi M.J."/>
            <person name="Chan M.M."/>
            <person name="Tang C.C."/>
            <person name="Onodera C.S."/>
            <person name="Deng J.M."/>
            <person name="Akiyama K."/>
            <person name="Ansari Y."/>
            <person name="Arakawa T."/>
            <person name="Banh J."/>
            <person name="Banno F."/>
            <person name="Bowser L."/>
            <person name="Brooks S.Y."/>
            <person name="Carninci P."/>
            <person name="Chao Q."/>
            <person name="Choy N."/>
            <person name="Enju A."/>
            <person name="Goldsmith A.D."/>
            <person name="Gurjal M."/>
            <person name="Hansen N.F."/>
            <person name="Hayashizaki Y."/>
            <person name="Johnson-Hopson C."/>
            <person name="Hsuan V.W."/>
            <person name="Iida K."/>
            <person name="Karnes M."/>
            <person name="Khan S."/>
            <person name="Koesema E."/>
            <person name="Ishida J."/>
            <person name="Jiang P.X."/>
            <person name="Jones T."/>
            <person name="Kawai J."/>
            <person name="Kamiya A."/>
            <person name="Meyers C."/>
            <person name="Nakajima M."/>
            <person name="Narusaka M."/>
            <person name="Seki M."/>
            <person name="Sakurai T."/>
            <person name="Satou M."/>
            <person name="Tamse R."/>
            <person name="Vaysberg M."/>
            <person name="Wallender E.K."/>
            <person name="Wong C."/>
            <person name="Yamamura Y."/>
            <person name="Yuan S."/>
            <person name="Shinozaki K."/>
            <person name="Davis R.W."/>
            <person name="Theologis A."/>
            <person name="Ecker J.R."/>
        </authorList>
    </citation>
    <scope>NUCLEOTIDE SEQUENCE [LARGE SCALE MRNA]</scope>
    <source>
        <strain>cv. Columbia</strain>
    </source>
</reference>
<reference key="5">
    <citation type="journal article" date="2001" name="Plant Mol. Biol.">
        <title>Molecular genetics of nucleotide sugar interconversion pathways in plants.</title>
        <authorList>
            <person name="Reiter W.-D."/>
            <person name="Vanzin G.F."/>
        </authorList>
    </citation>
    <scope>IDENTIFICATION</scope>
    <scope>NOMENCLATURE</scope>
</reference>
<reference key="6">
    <citation type="journal article" date="2004" name="Plant Physiol.">
        <title>The biosynthesis of D-galacturonate in plants. Functional cloning and characterization of a membrane-anchored UDP-D-glucuronate 4-epimerase from Arabidopsis.</title>
        <authorList>
            <person name="Moelhoej M."/>
            <person name="Verma R."/>
            <person name="Reiter W.-D."/>
        </authorList>
    </citation>
    <scope>IDENTIFICATION</scope>
    <scope>TISSUE SPECIFICITY</scope>
</reference>
<reference key="7">
    <citation type="journal article" date="2004" name="FEBS Lett.">
        <title>Identification and characterization of a UDP-D-glucuronate 4-epimerase in Arabidopsis.</title>
        <authorList>
            <person name="Usadel B."/>
            <person name="Schlueter U."/>
            <person name="Moelhoej M."/>
            <person name="Gipmans M."/>
            <person name="Verma R."/>
            <person name="Kossmann J."/>
            <person name="Reiter W.-D."/>
            <person name="Pauly M."/>
        </authorList>
    </citation>
    <scope>TISSUE SPECIFICITY</scope>
</reference>
<gene>
    <name type="primary">GAE4</name>
    <name type="synonym">UGlcAE1</name>
    <name type="ordered locus">At2g45310</name>
    <name type="ORF">F4L23</name>
</gene>
<protein>
    <recommendedName>
        <fullName>UDP-glucuronate 4-epimerase 4</fullName>
        <ecNumber>5.1.3.6</ecNumber>
    </recommendedName>
    <alternativeName>
        <fullName>UDP-glucuronic acid epimerase 4</fullName>
        <shortName>AtUGlcAE1</shortName>
    </alternativeName>
</protein>
<sequence>MSRLDDIPSSPGKFKMEKSSYLHRLRFQSSLTKFAFFSFFLLCLISLLFLRSPPSINPSSPSDPSRRSLRTNTYGGPAWEKRLRSSARIRTSTNNGITVLVTGAAGFVGTHVSAALKRRGDGVIGLDNFNDYYDPSLKRARRALLERSGIFIVEGDINDVELLRKLFKIVSFTHVMHLAAQAGVRYAMENPSSYVHSNIAGFVNLLEICKSVNPQPAIVWASSSSVYGLNTKVPFSEKDKTDQPASLYAATKKAGEEIAHTYNHIYGLSLTGLRFFTVYGPWGRPDMAYFFFTKDILKGKSISIFESANHGTVARDFTYIDDIVKGCLAALDTAEKSTGSGGKKRGPAQLRVFNLGNTSPVPVSDLVRILERQLKVKAKKNLIKMPRNGDVPFTHANISLAQRELGYKPTTDLQTGLKKFVRWYLSYYSGDKKAAAR</sequence>
<name>GAE4_ARATH</name>
<accession>O22141</accession>
<organism>
    <name type="scientific">Arabidopsis thaliana</name>
    <name type="common">Mouse-ear cress</name>
    <dbReference type="NCBI Taxonomy" id="3702"/>
    <lineage>
        <taxon>Eukaryota</taxon>
        <taxon>Viridiplantae</taxon>
        <taxon>Streptophyta</taxon>
        <taxon>Embryophyta</taxon>
        <taxon>Tracheophyta</taxon>
        <taxon>Spermatophyta</taxon>
        <taxon>Magnoliopsida</taxon>
        <taxon>eudicotyledons</taxon>
        <taxon>Gunneridae</taxon>
        <taxon>Pentapetalae</taxon>
        <taxon>rosids</taxon>
        <taxon>malvids</taxon>
        <taxon>Brassicales</taxon>
        <taxon>Brassicaceae</taxon>
        <taxon>Camelineae</taxon>
        <taxon>Arabidopsis</taxon>
    </lineage>
</organism>
<proteinExistence type="evidence at protein level"/>
<comment type="function">
    <text>Involved in the synthesis of the negatively charged monosaccharide that forms the backbone of pectic cell wall components.</text>
</comment>
<comment type="catalytic activity">
    <reaction>
        <text>UDP-alpha-D-glucuronate = UDP-alpha-D-galacturonate</text>
        <dbReference type="Rhea" id="RHEA:11404"/>
        <dbReference type="ChEBI" id="CHEBI:57635"/>
        <dbReference type="ChEBI" id="CHEBI:58052"/>
        <dbReference type="EC" id="5.1.3.6"/>
    </reaction>
</comment>
<comment type="activity regulation">
    <text evidence="6">Activated by glycerol, not effected by dimethyl sulfoxide and inhibited by high concentration of monovalent salts, UDP-xylose, UDP-arabinose or UDP.</text>
</comment>
<comment type="biophysicochemical properties">
    <kinetics>
        <KM evidence="6">0.72 mM for UDP-glucuronate</KM>
        <text>Equilibrium between UDP-glucuronate and UDP-D-galacturonate established at 1:1.9. No activity with UDP-Galactose, UDP-Glucose, UDP-arabinose, UDP-Xylose, CDP-glucose or GDP-mannose.</text>
    </kinetics>
    <phDependence>
        <text evidence="6">Optimum pH is 7.5. Active from pH 6.8 to 8.2.</text>
    </phDependence>
    <temperatureDependence>
        <text evidence="6">Active between 20 and 55 degrees Celsius.</text>
    </temperatureDependence>
</comment>
<comment type="subunit">
    <text evidence="8">Homodimer.</text>
</comment>
<comment type="subcellular location">
    <subcellularLocation>
        <location evidence="7">Golgi apparatus</location>
        <location evidence="7">Golgi stack membrane</location>
        <topology evidence="7">Multi-pass membrane protein</topology>
    </subcellularLocation>
</comment>
<comment type="tissue specificity">
    <text evidence="4 5 6">In roots, leaves, siliques, flowers, pollen and stems.</text>
</comment>
<comment type="similarity">
    <text evidence="7">Belongs to the NAD(P)-dependent epimerase/dehydratase family.</text>
</comment>
<evidence type="ECO:0000250" key="1"/>
<evidence type="ECO:0000255" key="2"/>
<evidence type="ECO:0000256" key="3">
    <source>
        <dbReference type="SAM" id="MobiDB-lite"/>
    </source>
</evidence>
<evidence type="ECO:0000269" key="4">
    <source>
    </source>
</evidence>
<evidence type="ECO:0000269" key="5">
    <source>
    </source>
</evidence>
<evidence type="ECO:0000269" key="6">
    <source>
    </source>
</evidence>
<evidence type="ECO:0000305" key="7"/>
<evidence type="ECO:0000305" key="8">
    <source>
    </source>
</evidence>
<dbReference type="EC" id="5.1.3.6"/>
<dbReference type="EMBL" id="AY594693">
    <property type="protein sequence ID" value="AAT06796.1"/>
    <property type="molecule type" value="mRNA"/>
</dbReference>
<dbReference type="EMBL" id="AC002387">
    <property type="protein sequence ID" value="AAB82632.1"/>
    <property type="molecule type" value="Genomic_DNA"/>
</dbReference>
<dbReference type="EMBL" id="CP002685">
    <property type="protein sequence ID" value="AEC10537.1"/>
    <property type="molecule type" value="Genomic_DNA"/>
</dbReference>
<dbReference type="EMBL" id="BT005652">
    <property type="protein sequence ID" value="AAO64072.1"/>
    <property type="molecule type" value="mRNA"/>
</dbReference>
<dbReference type="EMBL" id="BT004225">
    <property type="protein sequence ID" value="AAO42241.1"/>
    <property type="molecule type" value="mRNA"/>
</dbReference>
<dbReference type="PIR" id="A84889">
    <property type="entry name" value="A84889"/>
</dbReference>
<dbReference type="RefSeq" id="NP_182056.1">
    <property type="nucleotide sequence ID" value="NM_130094.2"/>
</dbReference>
<dbReference type="SMR" id="O22141"/>
<dbReference type="FunCoup" id="O22141">
    <property type="interactions" value="385"/>
</dbReference>
<dbReference type="STRING" id="3702.O22141"/>
<dbReference type="iPTMnet" id="O22141"/>
<dbReference type="PaxDb" id="3702-AT2G45310.1"/>
<dbReference type="ProteomicsDB" id="230008"/>
<dbReference type="EnsemblPlants" id="AT2G45310.1">
    <property type="protein sequence ID" value="AT2G45310.1"/>
    <property type="gene ID" value="AT2G45310"/>
</dbReference>
<dbReference type="GeneID" id="819139"/>
<dbReference type="Gramene" id="AT2G45310.1">
    <property type="protein sequence ID" value="AT2G45310.1"/>
    <property type="gene ID" value="AT2G45310"/>
</dbReference>
<dbReference type="KEGG" id="ath:AT2G45310"/>
<dbReference type="Araport" id="AT2G45310"/>
<dbReference type="TAIR" id="AT2G45310">
    <property type="gene designation" value="GAE4"/>
</dbReference>
<dbReference type="eggNOG" id="KOG1371">
    <property type="taxonomic scope" value="Eukaryota"/>
</dbReference>
<dbReference type="HOGENOM" id="CLU_007383_1_2_1"/>
<dbReference type="InParanoid" id="O22141"/>
<dbReference type="OMA" id="WHTTAST"/>
<dbReference type="PhylomeDB" id="O22141"/>
<dbReference type="BioCyc" id="ARA:AT2G45310-MONOMER"/>
<dbReference type="BioCyc" id="MetaCyc:AT2G45310-MONOMER"/>
<dbReference type="BRENDA" id="5.1.3.6">
    <property type="organism ID" value="399"/>
</dbReference>
<dbReference type="SABIO-RK" id="O22141"/>
<dbReference type="PRO" id="PR:O22141"/>
<dbReference type="Proteomes" id="UP000006548">
    <property type="component" value="Chromosome 2"/>
</dbReference>
<dbReference type="ExpressionAtlas" id="O22141">
    <property type="expression patterns" value="baseline and differential"/>
</dbReference>
<dbReference type="GO" id="GO:0032580">
    <property type="term" value="C:Golgi cisterna membrane"/>
    <property type="evidence" value="ECO:0007669"/>
    <property type="project" value="UniProtKB-SubCell"/>
</dbReference>
<dbReference type="GO" id="GO:0050378">
    <property type="term" value="F:UDP-glucuronate 4-epimerase activity"/>
    <property type="evidence" value="ECO:0007669"/>
    <property type="project" value="UniProtKB-EC"/>
</dbReference>
<dbReference type="CDD" id="cd05253">
    <property type="entry name" value="UDP_GE_SDE_e"/>
    <property type="match status" value="1"/>
</dbReference>
<dbReference type="FunFam" id="3.40.50.720:FF:000198">
    <property type="entry name" value="UDP-glucuronate 4-epimerase 3"/>
    <property type="match status" value="1"/>
</dbReference>
<dbReference type="Gene3D" id="3.40.50.720">
    <property type="entry name" value="NAD(P)-binding Rossmann-like Domain"/>
    <property type="match status" value="1"/>
</dbReference>
<dbReference type="InterPro" id="IPR001509">
    <property type="entry name" value="Epimerase_deHydtase"/>
</dbReference>
<dbReference type="InterPro" id="IPR036291">
    <property type="entry name" value="NAD(P)-bd_dom_sf"/>
</dbReference>
<dbReference type="PANTHER" id="PTHR43574">
    <property type="entry name" value="EPIMERASE-RELATED"/>
    <property type="match status" value="1"/>
</dbReference>
<dbReference type="Pfam" id="PF01370">
    <property type="entry name" value="Epimerase"/>
    <property type="match status" value="1"/>
</dbReference>
<dbReference type="PRINTS" id="PR01713">
    <property type="entry name" value="NUCEPIMERASE"/>
</dbReference>
<dbReference type="SUPFAM" id="SSF51735">
    <property type="entry name" value="NAD(P)-binding Rossmann-fold domains"/>
    <property type="match status" value="1"/>
</dbReference>
<keyword id="KW-0119">Carbohydrate metabolism</keyword>
<keyword id="KW-0333">Golgi apparatus</keyword>
<keyword id="KW-0413">Isomerase</keyword>
<keyword id="KW-0472">Membrane</keyword>
<keyword id="KW-0520">NAD</keyword>
<keyword id="KW-1185">Reference proteome</keyword>
<keyword id="KW-0812">Transmembrane</keyword>
<keyword id="KW-1133">Transmembrane helix</keyword>
<feature type="chain" id="PRO_0000292599" description="UDP-glucuronate 4-epimerase 4">
    <location>
        <begin position="1"/>
        <end position="437"/>
    </location>
</feature>
<feature type="transmembrane region" description="Helical" evidence="2">
    <location>
        <begin position="30"/>
        <end position="50"/>
    </location>
</feature>
<feature type="transmembrane region" description="Helical" evidence="2">
    <location>
        <begin position="96"/>
        <end position="116"/>
    </location>
</feature>
<feature type="region of interest" description="Disordered" evidence="3">
    <location>
        <begin position="56"/>
        <end position="76"/>
    </location>
</feature>
<feature type="active site" description="Proton acceptor" evidence="1">
    <location>
        <position position="248"/>
    </location>
</feature>
<feature type="binding site" evidence="1">
    <location>
        <begin position="98"/>
        <end position="129"/>
    </location>
    <ligand>
        <name>NAD(+)</name>
        <dbReference type="ChEBI" id="CHEBI:57540"/>
    </ligand>
</feature>